<dbReference type="EMBL" id="AF193811">
    <property type="protein sequence ID" value="AAF63243.1"/>
    <property type="molecule type" value="mRNA"/>
</dbReference>
<dbReference type="EMBL" id="AF510714">
    <property type="protein sequence ID" value="AAP47143.1"/>
    <property type="molecule type" value="Genomic_DNA"/>
</dbReference>
<dbReference type="EMBL" id="AAFI02000055">
    <property type="protein sequence ID" value="EAL65679.1"/>
    <property type="molecule type" value="Genomic_DNA"/>
</dbReference>
<dbReference type="RefSeq" id="XP_639042.1">
    <property type="nucleotide sequence ID" value="XM_633950.1"/>
</dbReference>
<dbReference type="SMR" id="Q9NIV0"/>
<dbReference type="FunCoup" id="Q9NIV0">
    <property type="interactions" value="4"/>
</dbReference>
<dbReference type="STRING" id="44689.Q9NIV0"/>
<dbReference type="TCDB" id="1.A.11.4.6">
    <property type="family name" value="the ammonium transporter channel (amt) family"/>
</dbReference>
<dbReference type="GlyCosmos" id="Q9NIV0">
    <property type="glycosylation" value="1 site, No reported glycans"/>
</dbReference>
<dbReference type="GlyGen" id="Q9NIV0">
    <property type="glycosylation" value="1 site"/>
</dbReference>
<dbReference type="PaxDb" id="44689-DDB0191180"/>
<dbReference type="ABCD" id="Q9NIV0">
    <property type="antibodies" value="1 sequenced antibody"/>
</dbReference>
<dbReference type="EnsemblProtists" id="EAL65679">
    <property type="protein sequence ID" value="EAL65679"/>
    <property type="gene ID" value="DDB_G0283389"/>
</dbReference>
<dbReference type="GeneID" id="8624067"/>
<dbReference type="KEGG" id="ddi:DDB_G0283389"/>
<dbReference type="dictyBase" id="DDB_G0283389">
    <property type="gene designation" value="rhgA"/>
</dbReference>
<dbReference type="VEuPathDB" id="AmoebaDB:DDB_G0283389"/>
<dbReference type="eggNOG" id="KOG3796">
    <property type="taxonomic scope" value="Eukaryota"/>
</dbReference>
<dbReference type="HOGENOM" id="CLU_021386_1_0_1"/>
<dbReference type="InParanoid" id="Q9NIV0"/>
<dbReference type="OMA" id="LAVFTIQ"/>
<dbReference type="PhylomeDB" id="Q9NIV0"/>
<dbReference type="Reactome" id="R-DDI-444411">
    <property type="pathway name" value="Rhesus glycoproteins mediate ammonium transport"/>
</dbReference>
<dbReference type="PRO" id="PR:Q9NIV0"/>
<dbReference type="Proteomes" id="UP000002195">
    <property type="component" value="Chromosome 4"/>
</dbReference>
<dbReference type="GO" id="GO:0000331">
    <property type="term" value="C:contractile vacuole"/>
    <property type="evidence" value="ECO:0000314"/>
    <property type="project" value="dictyBase"/>
</dbReference>
<dbReference type="GO" id="GO:0005768">
    <property type="term" value="C:endosome"/>
    <property type="evidence" value="ECO:0000314"/>
    <property type="project" value="dictyBase"/>
</dbReference>
<dbReference type="GO" id="GO:0016020">
    <property type="term" value="C:membrane"/>
    <property type="evidence" value="ECO:0000250"/>
    <property type="project" value="dictyBase"/>
</dbReference>
<dbReference type="GO" id="GO:0005886">
    <property type="term" value="C:plasma membrane"/>
    <property type="evidence" value="ECO:0000314"/>
    <property type="project" value="dictyBase"/>
</dbReference>
<dbReference type="GO" id="GO:0008519">
    <property type="term" value="F:ammonium channel activity"/>
    <property type="evidence" value="ECO:0000250"/>
    <property type="project" value="dictyBase"/>
</dbReference>
<dbReference type="GO" id="GO:0097272">
    <property type="term" value="P:ammonium homeostasis"/>
    <property type="evidence" value="ECO:0000318"/>
    <property type="project" value="GO_Central"/>
</dbReference>
<dbReference type="GO" id="GO:0072488">
    <property type="term" value="P:ammonium transmembrane transport"/>
    <property type="evidence" value="ECO:0000250"/>
    <property type="project" value="dictyBase"/>
</dbReference>
<dbReference type="FunFam" id="1.10.3430.10:FF:000018">
    <property type="entry name" value="Rhesus-like glycoprotein B"/>
    <property type="match status" value="1"/>
</dbReference>
<dbReference type="Gene3D" id="1.10.3430.10">
    <property type="entry name" value="Ammonium transporter AmtB like domains"/>
    <property type="match status" value="1"/>
</dbReference>
<dbReference type="InterPro" id="IPR029020">
    <property type="entry name" value="Ammonium/urea_transptr"/>
</dbReference>
<dbReference type="InterPro" id="IPR024041">
    <property type="entry name" value="NH4_transpt_AmtB-like_dom"/>
</dbReference>
<dbReference type="InterPro" id="IPR002229">
    <property type="entry name" value="RhesusRHD"/>
</dbReference>
<dbReference type="PANTHER" id="PTHR11730">
    <property type="entry name" value="AMMONIUM TRANSPORTER"/>
    <property type="match status" value="1"/>
</dbReference>
<dbReference type="PANTHER" id="PTHR11730:SF60">
    <property type="entry name" value="RH50, ISOFORM D"/>
    <property type="match status" value="1"/>
</dbReference>
<dbReference type="Pfam" id="PF00909">
    <property type="entry name" value="Ammonium_transp"/>
    <property type="match status" value="1"/>
</dbReference>
<dbReference type="PRINTS" id="PR00342">
    <property type="entry name" value="RHESUSRHD"/>
</dbReference>
<dbReference type="SUPFAM" id="SSF111352">
    <property type="entry name" value="Ammonium transporter"/>
    <property type="match status" value="1"/>
</dbReference>
<reference key="1">
    <citation type="journal article" date="2000" name="J. Biol. Chem.">
        <title>Characterization of human RhCG and mouse Rhcg as novel nonerythroid Rh glycoprotein homologues predominantly expressed in kidney and testis.</title>
        <authorList>
            <person name="Liu Z."/>
            <person name="Chen Y."/>
            <person name="Mo R."/>
            <person name="Hui C.-C."/>
            <person name="Cheng J.-F."/>
            <person name="Mohandas N."/>
            <person name="Huang C.-H."/>
        </authorList>
    </citation>
    <scope>NUCLEOTIDE SEQUENCE [MRNA]</scope>
    <source>
        <strain>AX2</strain>
    </source>
</reference>
<reference key="2">
    <citation type="journal article" date="2005" name="Nature">
        <title>The genome of the social amoeba Dictyostelium discoideum.</title>
        <authorList>
            <person name="Eichinger L."/>
            <person name="Pachebat J.A."/>
            <person name="Gloeckner G."/>
            <person name="Rajandream M.A."/>
            <person name="Sucgang R."/>
            <person name="Berriman M."/>
            <person name="Song J."/>
            <person name="Olsen R."/>
            <person name="Szafranski K."/>
            <person name="Xu Q."/>
            <person name="Tunggal B."/>
            <person name="Kummerfeld S."/>
            <person name="Madera M."/>
            <person name="Konfortov B.A."/>
            <person name="Rivero F."/>
            <person name="Bankier A.T."/>
            <person name="Lehmann R."/>
            <person name="Hamlin N."/>
            <person name="Davies R."/>
            <person name="Gaudet P."/>
            <person name="Fey P."/>
            <person name="Pilcher K."/>
            <person name="Chen G."/>
            <person name="Saunders D."/>
            <person name="Sodergren E.J."/>
            <person name="Davis P."/>
            <person name="Kerhornou A."/>
            <person name="Nie X."/>
            <person name="Hall N."/>
            <person name="Anjard C."/>
            <person name="Hemphill L."/>
            <person name="Bason N."/>
            <person name="Farbrother P."/>
            <person name="Desany B."/>
            <person name="Just E."/>
            <person name="Morio T."/>
            <person name="Rost R."/>
            <person name="Churcher C.M."/>
            <person name="Cooper J."/>
            <person name="Haydock S."/>
            <person name="van Driessche N."/>
            <person name="Cronin A."/>
            <person name="Goodhead I."/>
            <person name="Muzny D.M."/>
            <person name="Mourier T."/>
            <person name="Pain A."/>
            <person name="Lu M."/>
            <person name="Harper D."/>
            <person name="Lindsay R."/>
            <person name="Hauser H."/>
            <person name="James K.D."/>
            <person name="Quiles M."/>
            <person name="Madan Babu M."/>
            <person name="Saito T."/>
            <person name="Buchrieser C."/>
            <person name="Wardroper A."/>
            <person name="Felder M."/>
            <person name="Thangavelu M."/>
            <person name="Johnson D."/>
            <person name="Knights A."/>
            <person name="Loulseged H."/>
            <person name="Mungall K.L."/>
            <person name="Oliver K."/>
            <person name="Price C."/>
            <person name="Quail M.A."/>
            <person name="Urushihara H."/>
            <person name="Hernandez J."/>
            <person name="Rabbinowitsch E."/>
            <person name="Steffen D."/>
            <person name="Sanders M."/>
            <person name="Ma J."/>
            <person name="Kohara Y."/>
            <person name="Sharp S."/>
            <person name="Simmonds M.N."/>
            <person name="Spiegler S."/>
            <person name="Tivey A."/>
            <person name="Sugano S."/>
            <person name="White B."/>
            <person name="Walker D."/>
            <person name="Woodward J.R."/>
            <person name="Winckler T."/>
            <person name="Tanaka Y."/>
            <person name="Shaulsky G."/>
            <person name="Schleicher M."/>
            <person name="Weinstock G.M."/>
            <person name="Rosenthal A."/>
            <person name="Cox E.C."/>
            <person name="Chisholm R.L."/>
            <person name="Gibbs R.A."/>
            <person name="Loomis W.F."/>
            <person name="Platzer M."/>
            <person name="Kay R.R."/>
            <person name="Williams J.G."/>
            <person name="Dear P.H."/>
            <person name="Noegel A.A."/>
            <person name="Barrell B.G."/>
            <person name="Kuspa A."/>
        </authorList>
    </citation>
    <scope>NUCLEOTIDE SEQUENCE [LARGE SCALE GENOMIC DNA]</scope>
    <source>
        <strain>AX4</strain>
    </source>
</reference>
<reference key="3">
    <citation type="journal article" date="2001" name="Immunogenetics">
        <title>Localization of the Rh50-like protein to the contractile vacuole in Dictyostelium.</title>
        <authorList>
            <person name="Benghezal M."/>
            <person name="Gotthardt D."/>
            <person name="Cornillon S."/>
            <person name="Cosson P."/>
        </authorList>
    </citation>
    <scope>SUBCELLULAR LOCATION</scope>
    <scope>DISRUPTION PHENOTYPE</scope>
</reference>
<reference key="4">
    <citation type="journal article" date="2006" name="J. Cell Sci.">
        <title>Acidic clusters target transmembrane proteins to the contractile vacuole in Dictyostelium cells.</title>
        <authorList>
            <person name="Mercanti V."/>
            <person name="Blanc C."/>
            <person name="Lefkir Y."/>
            <person name="Cosson P."/>
            <person name="Letourneur F."/>
        </authorList>
    </citation>
    <scope>SUBCELLULAR LOCATION</scope>
    <scope>DISRUPTION PHENOTYPE</scope>
    <scope>INTERACTION WITH AP1G1</scope>
    <scope>MUTAGENESIS OF 478-ASP--GLU-482</scope>
</reference>
<reference key="5">
    <citation type="journal article" date="2007" name="Genome Biol.">
        <title>High-throughput analysis of spatio-temporal dynamics in Dictyostelium.</title>
        <authorList>
            <person name="Sawai S."/>
            <person name="Guan X.-J."/>
            <person name="Kuspa A."/>
            <person name="Cox E.C."/>
        </authorList>
    </citation>
    <scope>IDENTIFICATION</scope>
</reference>
<protein>
    <recommendedName>
        <fullName>Rhesus-like glycoprotein A</fullName>
    </recommendedName>
    <alternativeName>
        <fullName>Rh50-like protein rhgA</fullName>
    </alternativeName>
</protein>
<comment type="function">
    <text evidence="1">May be a carbon dioxide/bicarbonate transporter.</text>
</comment>
<comment type="subunit">
    <text evidence="5">Interacts with ap1g1.</text>
</comment>
<comment type="subcellular location">
    <subcellularLocation>
        <location evidence="4 5">Contractile vacuole</location>
    </subcellularLocation>
    <subcellularLocation>
        <location evidence="6">Membrane</location>
        <topology evidence="6">Multi-pass membrane protein</topology>
    </subcellularLocation>
</comment>
<comment type="domain">
    <text>Acidic motifs (DDEEE) in the C-terminal domain are necessary and sufficient for efficient transport to the contractile vacuole.</text>
</comment>
<comment type="disruption phenotype">
    <text evidence="4 5">Does not appear to exhibit a phenotype related to osmoregulation perhaps due to functional redundancy with rhgB.</text>
</comment>
<comment type="similarity">
    <text evidence="6">Belongs to the ammonium transporter (TC 2.A.49) family. Rh subfamily.</text>
</comment>
<organism>
    <name type="scientific">Dictyostelium discoideum</name>
    <name type="common">Social amoeba</name>
    <dbReference type="NCBI Taxonomy" id="44689"/>
    <lineage>
        <taxon>Eukaryota</taxon>
        <taxon>Amoebozoa</taxon>
        <taxon>Evosea</taxon>
        <taxon>Eumycetozoa</taxon>
        <taxon>Dictyostelia</taxon>
        <taxon>Dictyosteliales</taxon>
        <taxon>Dictyosteliaceae</taxon>
        <taxon>Dictyostelium</taxon>
    </lineage>
</organism>
<proteinExistence type="evidence at protein level"/>
<sequence length="527" mass="58360">MTHNDDDHKWVTTKRKEPIFFTVILFIFQIFMIICFAALTGYDTNKNYTGSENPDEFKGGEVQERVNNFYGYFRDINIMIFFGFGFLMTFLRRYGYSALGYTFIISALVSQWSVLLNGFFEAWSHSNKHGEFPSTWEFSMDSLLQGFFCSGSVMISYGAILGRVTPLHMLIMGIIEPIFFFLNVFIGEMNLEAIDVGGGMYIHLFGSVFGLTVAWFLTDRKSKECTDNAPSYSGDNFAMAGTLFLWMMWPSFNAAIAPLGEPQFRAIANTFLSLTGSTVATFIVSRLFSHLGNKLDMVHVQNSSLAGGVVQGCIAHMNINPGGAIAMGFIAGTISVCGYLFITPKVQRKLHIQDTCGILNLHCIPGFLGSIAAIFAAIKGLNNPNMYSKVEFEQIFRAGDSQASANLIATMVSIGLGIVGGLLVGVILLQLKKIKGLKSKEYYQDSAFWILPIDYPKDVATVVALNNAATSEDTAGGDDEEEGVGKEHGAVEMGKHNRIVQPKQDNKYHKQLPSDDEEEDEFKQEPI</sequence>
<gene>
    <name type="primary">rhgA</name>
    <name type="ORF">DDB_G0283389</name>
</gene>
<feature type="chain" id="PRO_0000390404" description="Rhesus-like glycoprotein A">
    <location>
        <begin position="1"/>
        <end position="527"/>
    </location>
</feature>
<feature type="topological domain" description="Cytoplasmic" evidence="2">
    <location>
        <begin position="1"/>
        <end position="18"/>
    </location>
</feature>
<feature type="transmembrane region" description="Helical" evidence="2">
    <location>
        <begin position="19"/>
        <end position="39"/>
    </location>
</feature>
<feature type="topological domain" description="Extracellular" evidence="2">
    <location>
        <begin position="40"/>
        <end position="70"/>
    </location>
</feature>
<feature type="transmembrane region" description="Helical" evidence="2">
    <location>
        <begin position="71"/>
        <end position="91"/>
    </location>
</feature>
<feature type="topological domain" description="Cytoplasmic" evidence="2">
    <location>
        <begin position="92"/>
        <end position="99"/>
    </location>
</feature>
<feature type="transmembrane region" description="Helical" evidence="2">
    <location>
        <begin position="100"/>
        <end position="120"/>
    </location>
</feature>
<feature type="topological domain" description="Extracellular" evidence="2">
    <location>
        <begin position="121"/>
        <end position="141"/>
    </location>
</feature>
<feature type="transmembrane region" description="Helical" evidence="2">
    <location>
        <begin position="142"/>
        <end position="162"/>
    </location>
</feature>
<feature type="topological domain" description="Cytoplasmic" evidence="2">
    <location>
        <begin position="163"/>
        <end position="166"/>
    </location>
</feature>
<feature type="transmembrane region" description="Helical" evidence="2">
    <location>
        <begin position="167"/>
        <end position="187"/>
    </location>
</feature>
<feature type="topological domain" description="Extracellular" evidence="2">
    <location>
        <begin position="188"/>
        <end position="195"/>
    </location>
</feature>
<feature type="transmembrane region" description="Helical" evidence="2">
    <location>
        <begin position="196"/>
        <end position="216"/>
    </location>
</feature>
<feature type="topological domain" description="Cytoplasmic" evidence="2">
    <location>
        <begin position="217"/>
        <end position="236"/>
    </location>
</feature>
<feature type="transmembrane region" description="Helical" evidence="2">
    <location>
        <begin position="237"/>
        <end position="257"/>
    </location>
</feature>
<feature type="topological domain" description="Extracellular" evidence="2">
    <location>
        <begin position="258"/>
        <end position="263"/>
    </location>
</feature>
<feature type="transmembrane region" description="Helical" evidence="2">
    <location>
        <begin position="264"/>
        <end position="284"/>
    </location>
</feature>
<feature type="topological domain" description="Cytoplasmic" evidence="2">
    <location>
        <begin position="285"/>
        <end position="299"/>
    </location>
</feature>
<feature type="transmembrane region" description="Helical" evidence="2">
    <location>
        <begin position="300"/>
        <end position="319"/>
    </location>
</feature>
<feature type="topological domain" description="Extracellular" evidence="2">
    <location>
        <begin position="320"/>
        <end position="321"/>
    </location>
</feature>
<feature type="transmembrane region" description="Helical" evidence="2">
    <location>
        <begin position="322"/>
        <end position="342"/>
    </location>
</feature>
<feature type="topological domain" description="Cytoplasmic" evidence="2">
    <location>
        <begin position="343"/>
        <end position="357"/>
    </location>
</feature>
<feature type="transmembrane region" description="Helical" evidence="2">
    <location>
        <begin position="358"/>
        <end position="378"/>
    </location>
</feature>
<feature type="topological domain" description="Extracellular" evidence="2">
    <location>
        <begin position="379"/>
        <end position="406"/>
    </location>
</feature>
<feature type="transmembrane region" description="Helical" evidence="2">
    <location>
        <begin position="407"/>
        <end position="427"/>
    </location>
</feature>
<feature type="topological domain" description="Cytoplasmic" evidence="2">
    <location>
        <begin position="428"/>
        <end position="527"/>
    </location>
</feature>
<feature type="region of interest" description="Disordered" evidence="3">
    <location>
        <begin position="471"/>
        <end position="527"/>
    </location>
</feature>
<feature type="compositionally biased region" description="Basic and acidic residues" evidence="3">
    <location>
        <begin position="483"/>
        <end position="495"/>
    </location>
</feature>
<feature type="compositionally biased region" description="Acidic residues" evidence="3">
    <location>
        <begin position="514"/>
        <end position="527"/>
    </location>
</feature>
<feature type="glycosylation site" description="N-linked (GlcNAc...) asparagine" evidence="2">
    <location>
        <position position="47"/>
    </location>
</feature>
<feature type="mutagenesis site" description="Decreased interaction with AP1G1, loss of transport to the contractile vacuole and mislocalization to the plasma membrane and small vesicular structures." evidence="5">
    <original>DDEEE</original>
    <variation>AAAAA</variation>
    <location>
        <begin position="478"/>
        <end position="482"/>
    </location>
</feature>
<name>RHGA_DICDI</name>
<evidence type="ECO:0000250" key="1"/>
<evidence type="ECO:0000255" key="2"/>
<evidence type="ECO:0000256" key="3">
    <source>
        <dbReference type="SAM" id="MobiDB-lite"/>
    </source>
</evidence>
<evidence type="ECO:0000269" key="4">
    <source>
    </source>
</evidence>
<evidence type="ECO:0000269" key="5">
    <source>
    </source>
</evidence>
<evidence type="ECO:0000305" key="6"/>
<keyword id="KW-0325">Glycoprotein</keyword>
<keyword id="KW-0472">Membrane</keyword>
<keyword id="KW-1185">Reference proteome</keyword>
<keyword id="KW-0812">Transmembrane</keyword>
<keyword id="KW-1133">Transmembrane helix</keyword>
<keyword id="KW-0813">Transport</keyword>
<keyword id="KW-0926">Vacuole</keyword>
<accession>Q9NIV0</accession>
<accession>Q54R49</accession>